<comment type="function">
    <text>This protein is involved in virus transmission.</text>
</comment>
<comment type="similarity">
    <text evidence="1">Belongs to the caulimoviridae ORF II family.</text>
</comment>
<proteinExistence type="inferred from homology"/>
<keyword id="KW-1185">Reference proteome</keyword>
<organism>
    <name type="scientific">Carnation etched ring virus</name>
    <name type="common">CERV</name>
    <dbReference type="NCBI Taxonomy" id="10640"/>
    <lineage>
        <taxon>Viruses</taxon>
        <taxon>Riboviria</taxon>
        <taxon>Pararnavirae</taxon>
        <taxon>Artverviricota</taxon>
        <taxon>Revtraviricetes</taxon>
        <taxon>Ortervirales</taxon>
        <taxon>Caulimoviridae</taxon>
        <taxon>Caulimovirus</taxon>
        <taxon>Caulimovirus incidianthi</taxon>
    </lineage>
</organism>
<accession>P05397</accession>
<feature type="chain" id="PRO_0000222074" description="Aphid transmission protein">
    <location>
        <begin position="1"/>
        <end position="168"/>
    </location>
</feature>
<organismHost>
    <name type="scientific">Dianthus caryophyllus</name>
    <name type="common">Carnation</name>
    <name type="synonym">Clove pink</name>
    <dbReference type="NCBI Taxonomy" id="3570"/>
</organismHost>
<evidence type="ECO:0000305" key="1"/>
<gene>
    <name type="ORF">ORF II</name>
</gene>
<reference key="1">
    <citation type="journal article" date="1986" name="EMBO J.">
        <title>The sequence of carnation etched ring virus DNA: comparison with cauliflower mosaic virus and retroviruses.</title>
        <authorList>
            <person name="Hull R."/>
            <person name="Sadler J."/>
            <person name="Longstaff M."/>
        </authorList>
    </citation>
    <scope>NUCLEOTIDE SEQUENCE [GENOMIC DNA]</scope>
</reference>
<sequence>MSLTTYPHIYKKEQILKLKRLNKLSNDRKFFFSSVKGTLPGIISHCNNINEILGRCYLGICKLNSFFGLSKDPSDKLSVSKSPSVYTLPSKIFKEGGGNGDNTTTQTDILKNAQDQVILSKKIDELQTQVKELSSKIEPEPLTKEDIKKTYETLSRIESGLKGIIGIE</sequence>
<dbReference type="EMBL" id="X04658">
    <property type="protein sequence ID" value="CAA28357.1"/>
    <property type="molecule type" value="Genomic_DNA"/>
</dbReference>
<dbReference type="PIR" id="S00851">
    <property type="entry name" value="S00851"/>
</dbReference>
<dbReference type="RefSeq" id="NP_612574.1">
    <property type="nucleotide sequence ID" value="NC_003498.1"/>
</dbReference>
<dbReference type="SMR" id="P05397"/>
<dbReference type="KEGG" id="vg:935428"/>
<dbReference type="OrthoDB" id="24349at10239"/>
<dbReference type="Proteomes" id="UP000008446">
    <property type="component" value="Segment"/>
</dbReference>
<dbReference type="InterPro" id="IPR004917">
    <property type="entry name" value="Caulimo_AT"/>
</dbReference>
<dbReference type="Pfam" id="PF03233">
    <property type="entry name" value="Cauli_AT"/>
    <property type="match status" value="1"/>
</dbReference>
<protein>
    <recommendedName>
        <fullName>Aphid transmission protein</fullName>
    </recommendedName>
    <alternativeName>
        <fullName>Atf</fullName>
    </alternativeName>
    <alternativeName>
        <fullName>Protein 2</fullName>
    </alternativeName>
</protein>
<name>VAT_CERV</name>